<feature type="chain" id="PRO_0000178690" description="Probable chromosome-partitioning protein ParB">
    <location>
        <begin position="1"/>
        <end position="290"/>
    </location>
</feature>
<proteinExistence type="inferred from homology"/>
<protein>
    <recommendedName>
        <fullName>Probable chromosome-partitioning protein ParB</fullName>
    </recommendedName>
</protein>
<evidence type="ECO:0000250" key="1"/>
<evidence type="ECO:0000305" key="2"/>
<keyword id="KW-0159">Chromosome partition</keyword>
<keyword id="KW-0238">DNA-binding</keyword>
<dbReference type="EMBL" id="X62540">
    <property type="protein sequence ID" value="CAA44422.1"/>
    <property type="molecule type" value="Genomic_DNA"/>
</dbReference>
<dbReference type="PIR" id="S18098">
    <property type="entry name" value="S18098"/>
</dbReference>
<dbReference type="RefSeq" id="WP_003253185.1">
    <property type="nucleotide sequence ID" value="NZ_VCPS01000003.1"/>
</dbReference>
<dbReference type="SMR" id="P0A152"/>
<dbReference type="eggNOG" id="COG1475">
    <property type="taxonomic scope" value="Bacteria"/>
</dbReference>
<dbReference type="OMA" id="DFNCTHD"/>
<dbReference type="GO" id="GO:0005694">
    <property type="term" value="C:chromosome"/>
    <property type="evidence" value="ECO:0007669"/>
    <property type="project" value="TreeGrafter"/>
</dbReference>
<dbReference type="GO" id="GO:0003677">
    <property type="term" value="F:DNA binding"/>
    <property type="evidence" value="ECO:0007669"/>
    <property type="project" value="UniProtKB-KW"/>
</dbReference>
<dbReference type="GO" id="GO:0007059">
    <property type="term" value="P:chromosome segregation"/>
    <property type="evidence" value="ECO:0007669"/>
    <property type="project" value="UniProtKB-KW"/>
</dbReference>
<dbReference type="GO" id="GO:0045881">
    <property type="term" value="P:positive regulation of sporulation resulting in formation of a cellular spore"/>
    <property type="evidence" value="ECO:0007669"/>
    <property type="project" value="TreeGrafter"/>
</dbReference>
<dbReference type="CDD" id="cd16393">
    <property type="entry name" value="SPO0J_N"/>
    <property type="match status" value="1"/>
</dbReference>
<dbReference type="FunFam" id="1.10.10.2830:FF:000001">
    <property type="entry name" value="Chromosome partitioning protein ParB"/>
    <property type="match status" value="1"/>
</dbReference>
<dbReference type="FunFam" id="3.90.1530.30:FF:000001">
    <property type="entry name" value="Chromosome partitioning protein ParB"/>
    <property type="match status" value="1"/>
</dbReference>
<dbReference type="Gene3D" id="1.10.10.2830">
    <property type="match status" value="1"/>
</dbReference>
<dbReference type="Gene3D" id="3.90.1530.30">
    <property type="match status" value="1"/>
</dbReference>
<dbReference type="InterPro" id="IPR050336">
    <property type="entry name" value="Chromosome_partition/occlusion"/>
</dbReference>
<dbReference type="InterPro" id="IPR041468">
    <property type="entry name" value="HTH_ParB/Spo0J"/>
</dbReference>
<dbReference type="InterPro" id="IPR004437">
    <property type="entry name" value="ParB/RepB/Spo0J"/>
</dbReference>
<dbReference type="InterPro" id="IPR003115">
    <property type="entry name" value="ParB/Sulfiredoxin_dom"/>
</dbReference>
<dbReference type="InterPro" id="IPR036086">
    <property type="entry name" value="ParB/Sulfiredoxin_sf"/>
</dbReference>
<dbReference type="InterPro" id="IPR057240">
    <property type="entry name" value="ParB_dimer_C"/>
</dbReference>
<dbReference type="NCBIfam" id="TIGR00180">
    <property type="entry name" value="parB_part"/>
    <property type="match status" value="1"/>
</dbReference>
<dbReference type="PANTHER" id="PTHR33375">
    <property type="entry name" value="CHROMOSOME-PARTITIONING PROTEIN PARB-RELATED"/>
    <property type="match status" value="1"/>
</dbReference>
<dbReference type="PANTHER" id="PTHR33375:SF1">
    <property type="entry name" value="CHROMOSOME-PARTITIONING PROTEIN PARB-RELATED"/>
    <property type="match status" value="1"/>
</dbReference>
<dbReference type="Pfam" id="PF17762">
    <property type="entry name" value="HTH_ParB"/>
    <property type="match status" value="1"/>
</dbReference>
<dbReference type="Pfam" id="PF23552">
    <property type="entry name" value="ParB_dimer"/>
    <property type="match status" value="1"/>
</dbReference>
<dbReference type="Pfam" id="PF02195">
    <property type="entry name" value="ParBc"/>
    <property type="match status" value="1"/>
</dbReference>
<dbReference type="SMART" id="SM00470">
    <property type="entry name" value="ParB"/>
    <property type="match status" value="1"/>
</dbReference>
<dbReference type="SUPFAM" id="SSF110849">
    <property type="entry name" value="ParB/Sulfiredoxin"/>
    <property type="match status" value="1"/>
</dbReference>
<sequence length="290" mass="32390">MAVKKRGLGRGLDALLSGPSVSALEEQAVKIDQKELQHLPVELVQRGKYQPRRDMDPEALEELAHSIRNHGVMQPIVVRPIGDNRYEIIAGERRWRATQQAGLDTIPAMVREVPDEAAIAMALIENIQREDLNPLEEAMALQRLQQEFELTQQQVADAVGKSRVTVANLLRLITLPDAIKTMLAHGDLEMGHARALLGLDENRQEEGARHVVARGLTVRQTEALVRQWLSDKPDPVEPSKPDPDIARLEQRLAERLGSAVQIRHGNKGKGQLVIRYNSLDELQGVLAHIR</sequence>
<accession>P0A152</accession>
<accession>P31857</accession>
<reference key="1">
    <citation type="journal article" date="1992" name="Mol. Microbiol.">
        <title>Genes and their organization in the replication origin region of the bacterial chromosome.</title>
        <authorList>
            <person name="Ogasawara N."/>
            <person name="Yoshikawa H."/>
        </authorList>
    </citation>
    <scope>NUCLEOTIDE SEQUENCE [GENOMIC DNA]</scope>
    <source>
        <strain>TN2100</strain>
    </source>
</reference>
<gene>
    <name type="primary">parB</name>
</gene>
<organism>
    <name type="scientific">Pseudomonas putida</name>
    <name type="common">Arthrobacter siderocapsulatus</name>
    <dbReference type="NCBI Taxonomy" id="303"/>
    <lineage>
        <taxon>Bacteria</taxon>
        <taxon>Pseudomonadati</taxon>
        <taxon>Pseudomonadota</taxon>
        <taxon>Gammaproteobacteria</taxon>
        <taxon>Pseudomonadales</taxon>
        <taxon>Pseudomonadaceae</taxon>
        <taxon>Pseudomonas</taxon>
    </lineage>
</organism>
<comment type="function">
    <text evidence="1">Involved in chromosome partition. Localize to both poles of the predivisional cell following completion of DNA replication. Binds to the DNA origin of replication (By similarity).</text>
</comment>
<comment type="similarity">
    <text evidence="2">Belongs to the ParB family.</text>
</comment>
<name>PARB_PSEPU</name>